<dbReference type="EMBL" id="CP000814">
    <property type="protein sequence ID" value="ABV52421.1"/>
    <property type="molecule type" value="Genomic_DNA"/>
</dbReference>
<dbReference type="RefSeq" id="WP_002852579.1">
    <property type="nucleotide sequence ID" value="NC_009839.1"/>
</dbReference>
<dbReference type="SMR" id="A8FLT4"/>
<dbReference type="KEGG" id="cju:C8J_0822"/>
<dbReference type="HOGENOM" id="CLU_148518_0_0_7"/>
<dbReference type="GO" id="GO:0022627">
    <property type="term" value="C:cytosolic small ribosomal subunit"/>
    <property type="evidence" value="ECO:0007669"/>
    <property type="project" value="TreeGrafter"/>
</dbReference>
<dbReference type="GO" id="GO:0019843">
    <property type="term" value="F:rRNA binding"/>
    <property type="evidence" value="ECO:0007669"/>
    <property type="project" value="UniProtKB-UniRule"/>
</dbReference>
<dbReference type="GO" id="GO:0003735">
    <property type="term" value="F:structural constituent of ribosome"/>
    <property type="evidence" value="ECO:0007669"/>
    <property type="project" value="InterPro"/>
</dbReference>
<dbReference type="GO" id="GO:0006412">
    <property type="term" value="P:translation"/>
    <property type="evidence" value="ECO:0007669"/>
    <property type="project" value="UniProtKB-UniRule"/>
</dbReference>
<dbReference type="CDD" id="cd00353">
    <property type="entry name" value="Ribosomal_S15p_S13e"/>
    <property type="match status" value="1"/>
</dbReference>
<dbReference type="FunFam" id="1.10.287.10:FF:000002">
    <property type="entry name" value="30S ribosomal protein S15"/>
    <property type="match status" value="1"/>
</dbReference>
<dbReference type="Gene3D" id="6.10.250.3130">
    <property type="match status" value="1"/>
</dbReference>
<dbReference type="Gene3D" id="1.10.287.10">
    <property type="entry name" value="S15/NS1, RNA-binding"/>
    <property type="match status" value="1"/>
</dbReference>
<dbReference type="HAMAP" id="MF_01343_B">
    <property type="entry name" value="Ribosomal_uS15_B"/>
    <property type="match status" value="1"/>
</dbReference>
<dbReference type="InterPro" id="IPR000589">
    <property type="entry name" value="Ribosomal_uS15"/>
</dbReference>
<dbReference type="InterPro" id="IPR005290">
    <property type="entry name" value="Ribosomal_uS15_bac-type"/>
</dbReference>
<dbReference type="InterPro" id="IPR009068">
    <property type="entry name" value="uS15_NS1_RNA-bd_sf"/>
</dbReference>
<dbReference type="NCBIfam" id="TIGR00952">
    <property type="entry name" value="S15_bact"/>
    <property type="match status" value="1"/>
</dbReference>
<dbReference type="PANTHER" id="PTHR23321">
    <property type="entry name" value="RIBOSOMAL PROTEIN S15, BACTERIAL AND ORGANELLAR"/>
    <property type="match status" value="1"/>
</dbReference>
<dbReference type="PANTHER" id="PTHR23321:SF26">
    <property type="entry name" value="SMALL RIBOSOMAL SUBUNIT PROTEIN US15M"/>
    <property type="match status" value="1"/>
</dbReference>
<dbReference type="Pfam" id="PF00312">
    <property type="entry name" value="Ribosomal_S15"/>
    <property type="match status" value="1"/>
</dbReference>
<dbReference type="SMART" id="SM01387">
    <property type="entry name" value="Ribosomal_S15"/>
    <property type="match status" value="1"/>
</dbReference>
<dbReference type="SUPFAM" id="SSF47060">
    <property type="entry name" value="S15/NS1 RNA-binding domain"/>
    <property type="match status" value="1"/>
</dbReference>
<dbReference type="PROSITE" id="PS00362">
    <property type="entry name" value="RIBOSOMAL_S15"/>
    <property type="match status" value="1"/>
</dbReference>
<keyword id="KW-0687">Ribonucleoprotein</keyword>
<keyword id="KW-0689">Ribosomal protein</keyword>
<keyword id="KW-0694">RNA-binding</keyword>
<keyword id="KW-0699">rRNA-binding</keyword>
<organism>
    <name type="scientific">Campylobacter jejuni subsp. jejuni serotype O:6 (strain 81116 / NCTC 11828)</name>
    <dbReference type="NCBI Taxonomy" id="407148"/>
    <lineage>
        <taxon>Bacteria</taxon>
        <taxon>Pseudomonadati</taxon>
        <taxon>Campylobacterota</taxon>
        <taxon>Epsilonproteobacteria</taxon>
        <taxon>Campylobacterales</taxon>
        <taxon>Campylobacteraceae</taxon>
        <taxon>Campylobacter</taxon>
    </lineage>
</organism>
<name>RS15_CAMJ8</name>
<gene>
    <name evidence="1" type="primary">rpsO</name>
    <name type="ordered locus">C8J_0822</name>
</gene>
<comment type="function">
    <text evidence="1">One of the primary rRNA binding proteins, it binds directly to 16S rRNA where it helps nucleate assembly of the platform of the 30S subunit by binding and bridging several RNA helices of the 16S rRNA.</text>
</comment>
<comment type="function">
    <text evidence="1">Forms an intersubunit bridge (bridge B4) with the 23S rRNA of the 50S subunit in the ribosome.</text>
</comment>
<comment type="subunit">
    <text evidence="1">Part of the 30S ribosomal subunit. Forms a bridge to the 50S subunit in the 70S ribosome, contacting the 23S rRNA.</text>
</comment>
<comment type="similarity">
    <text evidence="1">Belongs to the universal ribosomal protein uS15 family.</text>
</comment>
<evidence type="ECO:0000255" key="1">
    <source>
        <dbReference type="HAMAP-Rule" id="MF_01343"/>
    </source>
</evidence>
<evidence type="ECO:0000305" key="2"/>
<reference key="1">
    <citation type="journal article" date="2007" name="J. Bacteriol.">
        <title>The complete genome sequence of Campylobacter jejuni strain 81116 (NCTC11828).</title>
        <authorList>
            <person name="Pearson B.M."/>
            <person name="Gaskin D.J.H."/>
            <person name="Segers R.P.A.M."/>
            <person name="Wells J.M."/>
            <person name="Nuijten P.J.M."/>
            <person name="van Vliet A.H.M."/>
        </authorList>
    </citation>
    <scope>NUCLEOTIDE SEQUENCE [LARGE SCALE GENOMIC DNA]</scope>
    <source>
        <strain>81116 / NCTC 11828</strain>
    </source>
</reference>
<accession>A8FLT4</accession>
<sequence length="90" mass="10226">MALDSAKKAEIVAKFAKKPGDTGSTEVQVALLTARIAELTEHLKIYKKDFSSRLGLLKLVGQRKRLLSYLKRKDYNSYSKLITELNLRDK</sequence>
<proteinExistence type="inferred from homology"/>
<feature type="chain" id="PRO_1000073334" description="Small ribosomal subunit protein uS15">
    <location>
        <begin position="1"/>
        <end position="90"/>
    </location>
</feature>
<protein>
    <recommendedName>
        <fullName evidence="1">Small ribosomal subunit protein uS15</fullName>
    </recommendedName>
    <alternativeName>
        <fullName evidence="2">30S ribosomal protein S15</fullName>
    </alternativeName>
</protein>